<organism>
    <name type="scientific">Rattus norvegicus</name>
    <name type="common">Rat</name>
    <dbReference type="NCBI Taxonomy" id="10116"/>
    <lineage>
        <taxon>Eukaryota</taxon>
        <taxon>Metazoa</taxon>
        <taxon>Chordata</taxon>
        <taxon>Craniata</taxon>
        <taxon>Vertebrata</taxon>
        <taxon>Euteleostomi</taxon>
        <taxon>Mammalia</taxon>
        <taxon>Eutheria</taxon>
        <taxon>Euarchontoglires</taxon>
        <taxon>Glires</taxon>
        <taxon>Rodentia</taxon>
        <taxon>Myomorpha</taxon>
        <taxon>Muroidea</taxon>
        <taxon>Muridae</taxon>
        <taxon>Murinae</taxon>
        <taxon>Rattus</taxon>
    </lineage>
</organism>
<evidence type="ECO:0000250" key="1"/>
<evidence type="ECO:0000250" key="2">
    <source>
        <dbReference type="UniProtKB" id="O00264"/>
    </source>
</evidence>
<evidence type="ECO:0000250" key="3">
    <source>
        <dbReference type="UniProtKB" id="O55022"/>
    </source>
</evidence>
<evidence type="ECO:0000250" key="4">
    <source>
        <dbReference type="UniProtKB" id="Q95250"/>
    </source>
</evidence>
<evidence type="ECO:0000255" key="5"/>
<evidence type="ECO:0000256" key="6">
    <source>
        <dbReference type="SAM" id="MobiDB-lite"/>
    </source>
</evidence>
<evidence type="ECO:0000269" key="7">
    <source>
    </source>
</evidence>
<evidence type="ECO:0000269" key="8">
    <source ref="5"/>
</evidence>
<evidence type="ECO:0000303" key="9">
    <source>
    </source>
</evidence>
<evidence type="ECO:0000303" key="10">
    <source ref="5"/>
</evidence>
<evidence type="ECO:0000305" key="11"/>
<evidence type="ECO:0000312" key="12">
    <source>
        <dbReference type="RGD" id="70890"/>
    </source>
</evidence>
<evidence type="ECO:0007744" key="13">
    <source>
    </source>
</evidence>
<evidence type="ECO:0007744" key="14">
    <source>
    </source>
</evidence>
<accession>P70580</accession>
<accession>O70606</accession>
<accession>Q549C4</accession>
<keyword id="KW-0903">Direct protein sequencing</keyword>
<keyword id="KW-0256">Endoplasmic reticulum</keyword>
<keyword id="KW-0325">Glycoprotein</keyword>
<keyword id="KW-0408">Iron</keyword>
<keyword id="KW-0446">Lipid-binding</keyword>
<keyword id="KW-0472">Membrane</keyword>
<keyword id="KW-0479">Metal-binding</keyword>
<keyword id="KW-0492">Microsome</keyword>
<keyword id="KW-0496">Mitochondrion</keyword>
<keyword id="KW-1000">Mitochondrion outer membrane</keyword>
<keyword id="KW-0597">Phosphoprotein</keyword>
<keyword id="KW-0654">Proteoglycan</keyword>
<keyword id="KW-0675">Receptor</keyword>
<keyword id="KW-1185">Reference proteome</keyword>
<keyword id="KW-0964">Secreted</keyword>
<keyword id="KW-0754">Steroid-binding</keyword>
<keyword id="KW-0812">Transmembrane</keyword>
<keyword id="KW-1133">Transmembrane helix</keyword>
<gene>
    <name evidence="12" type="primary">Pgrmc1</name>
    <name type="synonym">25dx</name>
    <name type="synonym">Lewi</name>
    <name type="synonym">Pgrmc</name>
</gene>
<feature type="initiator methionine" description="Removed" evidence="8">
    <location>
        <position position="1"/>
    </location>
</feature>
<feature type="chain" id="PRO_0000121742" description="Membrane-associated progesterone receptor component 1">
    <location>
        <begin position="2"/>
        <end position="195"/>
    </location>
</feature>
<feature type="topological domain" description="Lumenal" evidence="5">
    <location>
        <begin position="2"/>
        <end position="24"/>
    </location>
</feature>
<feature type="transmembrane region" description="Helical" evidence="5">
    <location>
        <begin position="25"/>
        <end position="43"/>
    </location>
</feature>
<feature type="topological domain" description="Cytoplasmic" evidence="5">
    <location>
        <begin position="44"/>
        <end position="195"/>
    </location>
</feature>
<feature type="domain" description="Cytochrome b5 heme-binding">
    <location>
        <begin position="72"/>
        <end position="171"/>
    </location>
</feature>
<feature type="region of interest" description="Disordered" evidence="6">
    <location>
        <begin position="51"/>
        <end position="72"/>
    </location>
</feature>
<feature type="region of interest" description="Disordered" evidence="6">
    <location>
        <begin position="173"/>
        <end position="195"/>
    </location>
</feature>
<feature type="binding site" description="axial binding residue" evidence="2">
    <location>
        <position position="113"/>
    </location>
    <ligand>
        <name>heme</name>
        <dbReference type="ChEBI" id="CHEBI:30413"/>
    </ligand>
    <ligandPart>
        <name>Fe</name>
        <dbReference type="ChEBI" id="CHEBI:18248"/>
    </ligandPart>
</feature>
<feature type="modified residue" description="Phosphoserine" evidence="2">
    <location>
        <position position="54"/>
    </location>
</feature>
<feature type="modified residue" description="Phosphothreonine" evidence="2">
    <location>
        <position position="74"/>
    </location>
</feature>
<feature type="modified residue" description="Phosphoserine" evidence="13 14">
    <location>
        <position position="181"/>
    </location>
</feature>
<feature type="sequence conflict" description="In Ref. 1; AAB07125." evidence="11" ref="1">
    <original>TFKYHHV</original>
    <variation>SSPSSTITW</variation>
    <location>
        <begin position="161"/>
        <end position="167"/>
    </location>
</feature>
<feature type="sequence conflict" description="In Ref. 1; AAB07125." evidence="11" ref="1">
    <original>KEG</original>
    <variation>EGA</variation>
    <location>
        <begin position="172"/>
        <end position="174"/>
    </location>
</feature>
<feature type="sequence conflict" description="In Ref. 1; AAB07125." evidence="11" ref="1">
    <original>T</original>
    <variation>I</variation>
    <location>
        <position position="178"/>
    </location>
</feature>
<feature type="sequence conflict" description="In Ref. 1; AAB07125." evidence="11" ref="1">
    <original>PKDEAARKSD</original>
    <variation>QKMRLLGRVTEAVSGAYLFLYFAKSFVTFQSVFTTW</variation>
    <location>
        <begin position="186"/>
        <end position="195"/>
    </location>
</feature>
<proteinExistence type="evidence at protein level"/>
<reference key="1">
    <citation type="journal article" date="1996" name="Carcinogenesis">
        <title>Isolation and characterization of a novel gene induced by 2,3,7,8-tetrachlorodibenzo-p-dioxin in rat liver.</title>
        <authorList>
            <person name="Selmin O."/>
            <person name="Lucier G.W."/>
            <person name="Clark G.C."/>
            <person name="Tritscher A.M."/>
            <person name="Vanden Heuvel J.P."/>
            <person name="Gastel J.A."/>
            <person name="Walker N.J."/>
            <person name="Sutter T.R."/>
            <person name="Bell D.A."/>
        </authorList>
    </citation>
    <scope>NUCLEOTIDE SEQUENCE [MRNA]</scope>
    <source>
        <strain>Sprague-Dawley</strain>
        <tissue>Liver</tissue>
    </source>
</reference>
<reference key="2">
    <citation type="submission" date="1998-04" db="EMBL/GenBank/DDBJ databases">
        <title>Rat homologue to a putative progesterone binding protein: molecular characterization and localization.</title>
        <authorList>
            <person name="Noelte I."/>
            <person name="Sohn K."/>
            <person name="Wegehingl S."/>
            <person name="Wieland F."/>
        </authorList>
    </citation>
    <scope>NUCLEOTIDE SEQUENCE [MRNA]</scope>
    <source>
        <strain>Fischer 344</strain>
        <tissue>Liver</tissue>
    </source>
</reference>
<reference key="3">
    <citation type="journal article" date="1999" name="Mol. Cell. Neurosci.">
        <title>Cloning and expression of VEMA: a novel ventral midline antigen in the rat CNS.</title>
        <authorList>
            <person name="Runko E."/>
            <person name="Wideman C."/>
            <person name="Kaprielian Z."/>
        </authorList>
    </citation>
    <scope>NUCLEOTIDE SEQUENCE [MRNA]</scope>
    <source>
        <strain>Sprague-Dawley</strain>
        <tissue>Spinal cord</tissue>
    </source>
</reference>
<reference key="4">
    <citation type="journal article" date="2004" name="Genome Res.">
        <title>The status, quality, and expansion of the NIH full-length cDNA project: the Mammalian Gene Collection (MGC).</title>
        <authorList>
            <consortium name="The MGC Project Team"/>
        </authorList>
    </citation>
    <scope>NUCLEOTIDE SEQUENCE [LARGE SCALE MRNA]</scope>
    <source>
        <tissue>Prostate</tissue>
    </source>
</reference>
<reference key="5">
    <citation type="submission" date="1999-07" db="UniProtKB">
        <title>Acidic 25-kDa protein in rat liver microsomes.</title>
        <authorList>
            <person name="Hubbard M.J."/>
            <person name="McHugh N.J."/>
        </authorList>
    </citation>
    <scope>PROTEIN SEQUENCE OF 2-15</scope>
    <source>
        <strain>Wistar</strain>
        <tissue>Liver</tissue>
    </source>
</reference>
<reference key="6">
    <citation type="journal article" date="2006" name="Proc. Natl. Acad. Sci. U.S.A.">
        <title>Quantitative phosphoproteomics of vasopressin-sensitive renal cells: regulation of aquaporin-2 phosphorylation at two sites.</title>
        <authorList>
            <person name="Hoffert J.D."/>
            <person name="Pisitkun T."/>
            <person name="Wang G."/>
            <person name="Shen R.-F."/>
            <person name="Knepper M.A."/>
        </authorList>
    </citation>
    <scope>PHOSPHORYLATION [LARGE SCALE ANALYSIS] AT SER-181</scope>
    <scope>IDENTIFICATION BY MASS SPECTROMETRY [LARGE SCALE ANALYSIS]</scope>
</reference>
<reference key="7">
    <citation type="journal article" date="2012" name="Nat. Commun.">
        <title>Quantitative maps of protein phosphorylation sites across 14 different rat organs and tissues.</title>
        <authorList>
            <person name="Lundby A."/>
            <person name="Secher A."/>
            <person name="Lage K."/>
            <person name="Nordsborg N.B."/>
            <person name="Dmytriyev A."/>
            <person name="Lundby C."/>
            <person name="Olsen J.V."/>
        </authorList>
    </citation>
    <scope>PHOSPHORYLATION [LARGE SCALE ANALYSIS] AT SER-181</scope>
    <scope>IDENTIFICATION BY MASS SPECTROMETRY [LARGE SCALE ANALYSIS]</scope>
</reference>
<sequence>MAAEDVVATGADPSELEGGGLLQEIFTSPLNLLLLGLCIFLLYKIVRGDQPGASGDNDDDEPPPLPRLKPRDFTPAELRRYDGVQDPRILMAINGKVFDVTKGRKFYGPEGPYGVFAGRDASRGLATFCLDKEALKDEYDDLSDLTPAQQETLNDWDSQFTFKYHHVGKLLKEGEEPTVYSDDEEPKDEAARKSD</sequence>
<protein>
    <recommendedName>
        <fullName>Membrane-associated progesterone receptor component 1</fullName>
        <shortName evidence="2">mPR</shortName>
    </recommendedName>
    <alternativeName>
        <fullName evidence="10">25-DX</fullName>
    </alternativeName>
    <alternativeName>
        <fullName evidence="10">Acidic 25 kDa protein</fullName>
    </alternativeName>
    <alternativeName>
        <fullName evidence="9">Ventral midline antigen</fullName>
        <shortName evidence="9">VEMA</shortName>
    </alternativeName>
</protein>
<comment type="function">
    <text evidence="2 7">Component of a progesterone-binding protein complex. Binds progesterone. Has many reported cellular functions (heme homeostasis, interaction with CYPs). Required for the maintenance of uterine histoarchitecture and normal female reproductive lifespan. Intracellular heme chaperone. Regulates heme synthesis via interactions with FECH and acts as a heme donor for at least some hemoproteins (By similarity). May be implicated in 2,3,7,8-tetrachlorodibenzo-p-dioxin (TCDD) immunotoxicity (PubMed:9006096). Forms a ternary complex with TMEM97 receptor and low density lipid receptor/LDLR, which increases LDLR-mediated LDL lipoprotein internalization (By similarity).</text>
</comment>
<comment type="subunit">
    <text evidence="2">Homodimer. Forms stable homodimer through hydrophobic heme-heme stacking interactions. Interacts with FECH; the interaction results in decreased FECH activity. Interacts with EGFR, CYP1A1 and CYP3A4; the interactions require PGRMC1 homodimerization. Interacts with TMEM97 and LDLR; the interaction increases LDL internalization.</text>
</comment>
<comment type="subcellular location">
    <subcellularLocation>
        <location evidence="4">Microsome membrane</location>
        <topology evidence="5">Single-pass membrane protein</topology>
    </subcellularLocation>
    <subcellularLocation>
        <location evidence="2">Smooth endoplasmic reticulum membrane</location>
        <topology evidence="5">Single-pass membrane protein</topology>
    </subcellularLocation>
    <subcellularLocation>
        <location evidence="3">Mitochondrion outer membrane</location>
        <topology evidence="2">Single-pass membrane protein</topology>
        <orientation evidence="3">Extracellular side</orientation>
    </subcellularLocation>
    <subcellularLocation>
        <location evidence="2">Secreted</location>
    </subcellularLocation>
</comment>
<comment type="tissue specificity">
    <text>Expressed at high levels in lung, liver, kidney and brain, low in testis and spleen. Not expressed in heart and skeletal muscle.</text>
</comment>
<comment type="induction">
    <text>By dioxin.</text>
</comment>
<comment type="domain">
    <text evidence="1">The cytochrome b5 heme-binding domain lacks the conserved iron-binding His residues at positions 107 and 131.</text>
</comment>
<comment type="PTM">
    <text evidence="2">O-glycosylated; contains chondroitin sulfate attached to Ser-54. Ser-54 is in the cytoplasmic domain but the glycosylated form was detected in urine, suggesting that the membrane-bound form is cleaved, allowing for production of a secreted form which is glycosylated.</text>
</comment>
<comment type="miscellaneous">
    <text evidence="2">Non-classical progesterone receptors involved in extranuclear signaling are classified in 2 groups: the class II progestin and adipoQ receptor (PAQR) family (also called mPRs) (PAQR5, PAQR6, PAQR7, PAQR8 and PAQR9) and the b5-like heme/steroid-binding protein family (also called MAPRs) (PGRMC1, PGRMC2, NENF and CYB5D2).</text>
</comment>
<comment type="similarity">
    <text evidence="11">Belongs to the cytochrome b5 family. MAPR subfamily.</text>
</comment>
<name>PGRC1_RAT</name>
<dbReference type="EMBL" id="U63315">
    <property type="protein sequence ID" value="AAB07125.1"/>
    <property type="molecule type" value="mRNA"/>
</dbReference>
<dbReference type="EMBL" id="AJ005837">
    <property type="protein sequence ID" value="CAA06732.1"/>
    <property type="molecule type" value="mRNA"/>
</dbReference>
<dbReference type="EMBL" id="AF163321">
    <property type="protein sequence ID" value="AAF17359.1"/>
    <property type="molecule type" value="mRNA"/>
</dbReference>
<dbReference type="EMBL" id="BC062073">
    <property type="protein sequence ID" value="AAH62073.1"/>
    <property type="molecule type" value="mRNA"/>
</dbReference>
<dbReference type="RefSeq" id="NP_068534.2">
    <property type="nucleotide sequence ID" value="NM_021766.2"/>
</dbReference>
<dbReference type="SMR" id="P70580"/>
<dbReference type="BioGRID" id="253702">
    <property type="interactions" value="1"/>
</dbReference>
<dbReference type="FunCoup" id="P70580">
    <property type="interactions" value="2511"/>
</dbReference>
<dbReference type="IntAct" id="P70580">
    <property type="interactions" value="1"/>
</dbReference>
<dbReference type="STRING" id="10116.ENSRNOP00000017101"/>
<dbReference type="BindingDB" id="P70580"/>
<dbReference type="DrugCentral" id="P70580"/>
<dbReference type="iPTMnet" id="P70580"/>
<dbReference type="PhosphoSitePlus" id="P70580"/>
<dbReference type="jPOST" id="P70580"/>
<dbReference type="PaxDb" id="10116-ENSRNOP00000017101"/>
<dbReference type="Ensembl" id="ENSRNOT00000017101.7">
    <property type="protein sequence ID" value="ENSRNOP00000017101.6"/>
    <property type="gene ID" value="ENSRNOG00000012786.8"/>
</dbReference>
<dbReference type="GeneID" id="291948"/>
<dbReference type="KEGG" id="rno:291948"/>
<dbReference type="UCSC" id="RGD:70890">
    <property type="organism name" value="rat"/>
</dbReference>
<dbReference type="AGR" id="RGD:70890"/>
<dbReference type="CTD" id="10857"/>
<dbReference type="RGD" id="70890">
    <property type="gene designation" value="Pgrmc1"/>
</dbReference>
<dbReference type="eggNOG" id="KOG1110">
    <property type="taxonomic scope" value="Eukaryota"/>
</dbReference>
<dbReference type="GeneTree" id="ENSGT00940000160619"/>
<dbReference type="InParanoid" id="P70580"/>
<dbReference type="OMA" id="ANEWETQ"/>
<dbReference type="OrthoDB" id="547796at2759"/>
<dbReference type="PhylomeDB" id="P70580"/>
<dbReference type="Reactome" id="R-RNO-6798695">
    <property type="pathway name" value="Neutrophil degranulation"/>
</dbReference>
<dbReference type="PRO" id="PR:P70580"/>
<dbReference type="Proteomes" id="UP000002494">
    <property type="component" value="Chromosome X"/>
</dbReference>
<dbReference type="Bgee" id="ENSRNOG00000012786">
    <property type="expression patterns" value="Expressed in liver and 18 other cell types or tissues"/>
</dbReference>
<dbReference type="ExpressionAtlas" id="P70580">
    <property type="expression patterns" value="baseline and differential"/>
</dbReference>
<dbReference type="GO" id="GO:0044297">
    <property type="term" value="C:cell body"/>
    <property type="evidence" value="ECO:0000314"/>
    <property type="project" value="ARUK-UCL"/>
</dbReference>
<dbReference type="GO" id="GO:0012505">
    <property type="term" value="C:endomembrane system"/>
    <property type="evidence" value="ECO:0000318"/>
    <property type="project" value="GO_Central"/>
</dbReference>
<dbReference type="GO" id="GO:0005783">
    <property type="term" value="C:endoplasmic reticulum"/>
    <property type="evidence" value="ECO:0000318"/>
    <property type="project" value="GO_Central"/>
</dbReference>
<dbReference type="GO" id="GO:0005576">
    <property type="term" value="C:extracellular region"/>
    <property type="evidence" value="ECO:0007669"/>
    <property type="project" value="UniProtKB-SubCell"/>
</dbReference>
<dbReference type="GO" id="GO:0016020">
    <property type="term" value="C:membrane"/>
    <property type="evidence" value="ECO:0000318"/>
    <property type="project" value="GO_Central"/>
</dbReference>
<dbReference type="GO" id="GO:0005741">
    <property type="term" value="C:mitochondrial outer membrane"/>
    <property type="evidence" value="ECO:0000250"/>
    <property type="project" value="UniProtKB"/>
</dbReference>
<dbReference type="GO" id="GO:0043005">
    <property type="term" value="C:neuron projection"/>
    <property type="evidence" value="ECO:0000314"/>
    <property type="project" value="ARUK-UCL"/>
</dbReference>
<dbReference type="GO" id="GO:0043025">
    <property type="term" value="C:neuronal cell body"/>
    <property type="evidence" value="ECO:0000314"/>
    <property type="project" value="ARUK-UCL"/>
</dbReference>
<dbReference type="GO" id="GO:0014069">
    <property type="term" value="C:postsynaptic density"/>
    <property type="evidence" value="ECO:0000304"/>
    <property type="project" value="ARUK-UCL"/>
</dbReference>
<dbReference type="GO" id="GO:0030868">
    <property type="term" value="C:smooth endoplasmic reticulum membrane"/>
    <property type="evidence" value="ECO:0007669"/>
    <property type="project" value="UniProtKB-SubCell"/>
</dbReference>
<dbReference type="GO" id="GO:0045202">
    <property type="term" value="C:synapse"/>
    <property type="evidence" value="ECO:0000314"/>
    <property type="project" value="ARUK-UCL"/>
</dbReference>
<dbReference type="GO" id="GO:0020037">
    <property type="term" value="F:heme binding"/>
    <property type="evidence" value="ECO:0000250"/>
    <property type="project" value="UniProtKB"/>
</dbReference>
<dbReference type="GO" id="GO:0046872">
    <property type="term" value="F:metal ion binding"/>
    <property type="evidence" value="ECO:0007669"/>
    <property type="project" value="UniProtKB-KW"/>
</dbReference>
<dbReference type="GO" id="GO:0042803">
    <property type="term" value="F:protein homodimerization activity"/>
    <property type="evidence" value="ECO:0000250"/>
    <property type="project" value="UniProtKB"/>
</dbReference>
<dbReference type="GO" id="GO:0005496">
    <property type="term" value="F:steroid binding"/>
    <property type="evidence" value="ECO:0007669"/>
    <property type="project" value="UniProtKB-KW"/>
</dbReference>
<dbReference type="GO" id="GO:0008306">
    <property type="term" value="P:associative learning"/>
    <property type="evidence" value="ECO:0000316"/>
    <property type="project" value="ARUK-UCL"/>
</dbReference>
<dbReference type="GO" id="GO:0007411">
    <property type="term" value="P:axon guidance"/>
    <property type="evidence" value="ECO:0000270"/>
    <property type="project" value="RGD"/>
</dbReference>
<dbReference type="GO" id="GO:0006783">
    <property type="term" value="P:heme biosynthetic process"/>
    <property type="evidence" value="ECO:0000250"/>
    <property type="project" value="UniProtKB"/>
</dbReference>
<dbReference type="GO" id="GO:0007613">
    <property type="term" value="P:memory"/>
    <property type="evidence" value="ECO:0000316"/>
    <property type="project" value="ARUK-UCL"/>
</dbReference>
<dbReference type="GO" id="GO:0099563">
    <property type="term" value="P:modification of synaptic structure"/>
    <property type="evidence" value="ECO:0000316"/>
    <property type="project" value="ARUK-UCL"/>
</dbReference>
<dbReference type="GO" id="GO:1905809">
    <property type="term" value="P:negative regulation of synapse organization"/>
    <property type="evidence" value="ECO:0000316"/>
    <property type="project" value="ARUK-UCL"/>
</dbReference>
<dbReference type="GO" id="GO:0140077">
    <property type="term" value="P:positive regulation of lipoprotein transport"/>
    <property type="evidence" value="ECO:0000250"/>
    <property type="project" value="UniProtKB"/>
</dbReference>
<dbReference type="GO" id="GO:1903078">
    <property type="term" value="P:positive regulation of protein localization to plasma membrane"/>
    <property type="evidence" value="ECO:0000266"/>
    <property type="project" value="RGD"/>
</dbReference>
<dbReference type="FunFam" id="3.10.120.10:FF:000003">
    <property type="entry name" value="membrane-associated progesterone receptor component 1"/>
    <property type="match status" value="1"/>
</dbReference>
<dbReference type="Gene3D" id="3.10.120.10">
    <property type="entry name" value="Cytochrome b5-like heme/steroid binding domain"/>
    <property type="match status" value="1"/>
</dbReference>
<dbReference type="InterPro" id="IPR001199">
    <property type="entry name" value="Cyt_B5-like_heme/steroid-bd"/>
</dbReference>
<dbReference type="InterPro" id="IPR036400">
    <property type="entry name" value="Cyt_B5-like_heme/steroid_sf"/>
</dbReference>
<dbReference type="InterPro" id="IPR050577">
    <property type="entry name" value="MAPR/NEUFC/NENF-like"/>
</dbReference>
<dbReference type="PANTHER" id="PTHR10281:SF23">
    <property type="entry name" value="MEMBRANE-ASSOCIATED PROGESTERONE RECEPTOR COMPONENT 1"/>
    <property type="match status" value="1"/>
</dbReference>
<dbReference type="PANTHER" id="PTHR10281">
    <property type="entry name" value="MEMBRANE-ASSOCIATED PROGESTERONE RECEPTOR COMPONENT-RELATED"/>
    <property type="match status" value="1"/>
</dbReference>
<dbReference type="Pfam" id="PF00173">
    <property type="entry name" value="Cyt-b5"/>
    <property type="match status" value="1"/>
</dbReference>
<dbReference type="SMART" id="SM01117">
    <property type="entry name" value="Cyt-b5"/>
    <property type="match status" value="1"/>
</dbReference>
<dbReference type="SUPFAM" id="SSF55856">
    <property type="entry name" value="Cytochrome b5-like heme/steroid binding domain"/>
    <property type="match status" value="1"/>
</dbReference>